<keyword id="KW-1185">Reference proteome</keyword>
<keyword id="KW-0678">Repressor</keyword>
<keyword id="KW-0346">Stress response</keyword>
<keyword id="KW-0804">Transcription</keyword>
<keyword id="KW-0805">Transcription regulation</keyword>
<feature type="chain" id="PRO_1000092834" description="Heat-inducible transcription repressor HrcA">
    <location>
        <begin position="1"/>
        <end position="343"/>
    </location>
</feature>
<proteinExistence type="inferred from homology"/>
<sequence length="343" mass="39336">MPLDDRKKKILYAVITDYIMTAEPIGSRTIAKKYNIGLSSATIRNEMADLEEMGYLEQPHTSAGRIPSDKGYRFYVDSILRNYINNDPPISYNTREEIIAEFDEIVKKYARILANITHHTTVAKMPKLNPDRIKKIQLIPVASNKMIFLVVTDTGIVKNYLLNLCQNVDRTIFEFLNNLLNEKIAGKSEKDIFEFLQQDLRQMLGEMAFIADELINTILLSLKQLQETDIYADGTSHILDFPEYKDLGKAKNFFNLLDNKSLLNEVLEPEVDFIDVRIGSENKFEEMKDLSVIKTTYKINGRVVGTIGIIGPTRMDYRKLISEINVMTKELSNLLSSIYNDEI</sequence>
<protein>
    <recommendedName>
        <fullName evidence="1">Heat-inducible transcription repressor HrcA</fullName>
    </recommendedName>
</protein>
<dbReference type="EMBL" id="CP000924">
    <property type="protein sequence ID" value="ABY95046.1"/>
    <property type="molecule type" value="Genomic_DNA"/>
</dbReference>
<dbReference type="RefSeq" id="WP_003868079.1">
    <property type="nucleotide sequence ID" value="NC_010321.1"/>
</dbReference>
<dbReference type="SMR" id="B0KA83"/>
<dbReference type="STRING" id="340099.Teth39_1395"/>
<dbReference type="KEGG" id="tpd:Teth39_1395"/>
<dbReference type="eggNOG" id="COG1420">
    <property type="taxonomic scope" value="Bacteria"/>
</dbReference>
<dbReference type="HOGENOM" id="CLU_050019_1_0_9"/>
<dbReference type="Proteomes" id="UP000002156">
    <property type="component" value="Chromosome"/>
</dbReference>
<dbReference type="GO" id="GO:0003677">
    <property type="term" value="F:DNA binding"/>
    <property type="evidence" value="ECO:0007669"/>
    <property type="project" value="InterPro"/>
</dbReference>
<dbReference type="GO" id="GO:0045892">
    <property type="term" value="P:negative regulation of DNA-templated transcription"/>
    <property type="evidence" value="ECO:0007669"/>
    <property type="project" value="UniProtKB-UniRule"/>
</dbReference>
<dbReference type="FunFam" id="1.10.10.10:FF:000049">
    <property type="entry name" value="Heat-inducible transcription repressor HrcA"/>
    <property type="match status" value="1"/>
</dbReference>
<dbReference type="Gene3D" id="3.30.450.40">
    <property type="match status" value="1"/>
</dbReference>
<dbReference type="Gene3D" id="3.30.390.60">
    <property type="entry name" value="Heat-inducible transcription repressor hrca homolog, domain 3"/>
    <property type="match status" value="1"/>
</dbReference>
<dbReference type="Gene3D" id="1.10.10.10">
    <property type="entry name" value="Winged helix-like DNA-binding domain superfamily/Winged helix DNA-binding domain"/>
    <property type="match status" value="1"/>
</dbReference>
<dbReference type="HAMAP" id="MF_00081">
    <property type="entry name" value="HrcA"/>
    <property type="match status" value="1"/>
</dbReference>
<dbReference type="InterPro" id="IPR029016">
    <property type="entry name" value="GAF-like_dom_sf"/>
</dbReference>
<dbReference type="InterPro" id="IPR002571">
    <property type="entry name" value="HrcA"/>
</dbReference>
<dbReference type="InterPro" id="IPR021153">
    <property type="entry name" value="HrcA_C"/>
</dbReference>
<dbReference type="InterPro" id="IPR036388">
    <property type="entry name" value="WH-like_DNA-bd_sf"/>
</dbReference>
<dbReference type="InterPro" id="IPR036390">
    <property type="entry name" value="WH_DNA-bd_sf"/>
</dbReference>
<dbReference type="InterPro" id="IPR023120">
    <property type="entry name" value="WHTH_transcript_rep_HrcA_IDD"/>
</dbReference>
<dbReference type="NCBIfam" id="TIGR00331">
    <property type="entry name" value="hrcA"/>
    <property type="match status" value="1"/>
</dbReference>
<dbReference type="PANTHER" id="PTHR34824">
    <property type="entry name" value="HEAT-INDUCIBLE TRANSCRIPTION REPRESSOR HRCA"/>
    <property type="match status" value="1"/>
</dbReference>
<dbReference type="PANTHER" id="PTHR34824:SF1">
    <property type="entry name" value="HEAT-INDUCIBLE TRANSCRIPTION REPRESSOR HRCA"/>
    <property type="match status" value="1"/>
</dbReference>
<dbReference type="Pfam" id="PF01628">
    <property type="entry name" value="HrcA"/>
    <property type="match status" value="1"/>
</dbReference>
<dbReference type="PIRSF" id="PIRSF005485">
    <property type="entry name" value="HrcA"/>
    <property type="match status" value="1"/>
</dbReference>
<dbReference type="SUPFAM" id="SSF55781">
    <property type="entry name" value="GAF domain-like"/>
    <property type="match status" value="1"/>
</dbReference>
<dbReference type="SUPFAM" id="SSF46785">
    <property type="entry name" value="Winged helix' DNA-binding domain"/>
    <property type="match status" value="1"/>
</dbReference>
<organism>
    <name type="scientific">Thermoanaerobacter pseudethanolicus (strain ATCC 33223 / 39E)</name>
    <name type="common">Clostridium thermohydrosulfuricum</name>
    <dbReference type="NCBI Taxonomy" id="340099"/>
    <lineage>
        <taxon>Bacteria</taxon>
        <taxon>Bacillati</taxon>
        <taxon>Bacillota</taxon>
        <taxon>Clostridia</taxon>
        <taxon>Thermoanaerobacterales</taxon>
        <taxon>Thermoanaerobacteraceae</taxon>
        <taxon>Thermoanaerobacter</taxon>
    </lineage>
</organism>
<name>HRCA_THEP3</name>
<gene>
    <name evidence="1" type="primary">hrcA</name>
    <name type="ordered locus">Teth39_1395</name>
</gene>
<evidence type="ECO:0000255" key="1">
    <source>
        <dbReference type="HAMAP-Rule" id="MF_00081"/>
    </source>
</evidence>
<reference key="1">
    <citation type="submission" date="2008-01" db="EMBL/GenBank/DDBJ databases">
        <title>Complete sequence of Thermoanaerobacter pseudethanolicus 39E.</title>
        <authorList>
            <person name="Copeland A."/>
            <person name="Lucas S."/>
            <person name="Lapidus A."/>
            <person name="Barry K."/>
            <person name="Glavina del Rio T."/>
            <person name="Dalin E."/>
            <person name="Tice H."/>
            <person name="Pitluck S."/>
            <person name="Bruce D."/>
            <person name="Goodwin L."/>
            <person name="Saunders E."/>
            <person name="Brettin T."/>
            <person name="Detter J.C."/>
            <person name="Han C."/>
            <person name="Schmutz J."/>
            <person name="Larimer F."/>
            <person name="Land M."/>
            <person name="Hauser L."/>
            <person name="Kyrpides N."/>
            <person name="Lykidis A."/>
            <person name="Hemme C."/>
            <person name="Fields M.W."/>
            <person name="He Z."/>
            <person name="Zhou J."/>
            <person name="Richardson P."/>
        </authorList>
    </citation>
    <scope>NUCLEOTIDE SEQUENCE [LARGE SCALE GENOMIC DNA]</scope>
    <source>
        <strain>ATCC 33223 / DSM 2355 / 39E</strain>
    </source>
</reference>
<accession>B0KA83</accession>
<comment type="function">
    <text evidence="1">Negative regulator of class I heat shock genes (grpE-dnaK-dnaJ and groELS operons). Prevents heat-shock induction of these operons.</text>
</comment>
<comment type="similarity">
    <text evidence="1">Belongs to the HrcA family.</text>
</comment>